<evidence type="ECO:0000250" key="1"/>
<evidence type="ECO:0000250" key="2">
    <source>
        <dbReference type="UniProtKB" id="Q96GX5"/>
    </source>
</evidence>
<evidence type="ECO:0000255" key="3">
    <source>
        <dbReference type="PROSITE-ProRule" id="PRU00159"/>
    </source>
</evidence>
<evidence type="ECO:0000255" key="4">
    <source>
        <dbReference type="PROSITE-ProRule" id="PRU00618"/>
    </source>
</evidence>
<evidence type="ECO:0000255" key="5">
    <source>
        <dbReference type="PROSITE-ProRule" id="PRU10027"/>
    </source>
</evidence>
<evidence type="ECO:0000256" key="6">
    <source>
        <dbReference type="SAM" id="MobiDB-lite"/>
    </source>
</evidence>
<evidence type="ECO:0000305" key="7"/>
<proteinExistence type="inferred from homology"/>
<sequence>MEPTAGSEKESEGDTVTGECVNRIPVPRPPSIEEFTIVKPISRGAFGKVYLGQKGGKLYAVKVVKKADMINKNMTHQVQAERDALALSKSPFIVHLYYSLQSANNVYLVMEYLIGGDVKSLLHIYGYFDEEMAVKYISEVALALDYLHRHGIIHRDLKPDNMLISNEGHIKLTDFGLSKVTLNRDINMMDILTTPSMAKPRQDYSRTPGQVLSLISSLGFFTPVAEKNKDSANILSTHVSETSQLSQGLVCPMSVDHRDTTPYSSKLLNSCLETVAPNPGMPVKCLTSHLLQSRRRLATSSASSQSHTFVSSVESECHSSPRWEKDCQESDHALGYTVMSWNIIEKPSCTDSRDAIETKGFNKKDLELALSPIHNSSTIPETGRSCVNLAKKGFPGEVSWEARELDINNIHVATDTAQSGFHQSDQWAVDSGDATEEHLGKRGFKRNFELVDSSPCQNIIQHKKNCIEHKPRNAMSDGYINQRTGLTTEVQDLKLSVCGGQQSDCANKENMVNSFIDKPQTPEKSPVPMIAKNLLCELDEDCDKNNKRDLLSSSLLCSDDERASKSICMDSDSSFPGISVMESSLERQSLDPDKSIKESSFEESNIEDLLTVSPRWQENILPKGDENPAVQDSSQKMLAPSSKVLKTLTLSKRNAVAFRSFNSHINASNNSEPSKMSLTSLDGMDISCVYSGSYPMAITPNQKGTSYIPYQQTPNQVKSGTPYRTPKSVRRGAAPVDDGRILGTPDYLAPELLLGRAHGPAVDWWALGVCLFEFLTGIPPFNDETPQQVFQNILKRDIPWPEGEEKLSDNSQNAVEILLTIDNAKRAGMKELKRHHLFSDVDWENLQHQTMPFIPQPDDETDTSYFEARNNAQHLTISGFSL</sequence>
<accession>D2HXI8</accession>
<comment type="function">
    <text evidence="2">Serine/threonine kinase that plays a key role in M phase by acting as a regulator of mitosis entry and maintenance (By similarity). Acts by promoting the inactivation of protein phosphatase 2A (PP2A) during M phase: does not directly inhibit PP2A but acts by mediating phosphorylation and subsequent activation of ARPP19 and ENSA at 'Ser-62' and 'Ser-67', respectively (By similarity). ARPP19 and ENSA are phosphatase inhibitors that specifically inhibit the PPP2R2D (PR55-delta) subunit of PP2A. Inactivation of PP2A during M phase is essential to keep cyclin-B1-CDK1 activity high (By similarity). Following DNA damage, it is also involved in checkpoint recovery by being inhibited.</text>
</comment>
<comment type="catalytic activity">
    <reaction evidence="2">
        <text>L-seryl-[protein] + ATP = O-phospho-L-seryl-[protein] + ADP + H(+)</text>
        <dbReference type="Rhea" id="RHEA:17989"/>
        <dbReference type="Rhea" id="RHEA-COMP:9863"/>
        <dbReference type="Rhea" id="RHEA-COMP:11604"/>
        <dbReference type="ChEBI" id="CHEBI:15378"/>
        <dbReference type="ChEBI" id="CHEBI:29999"/>
        <dbReference type="ChEBI" id="CHEBI:30616"/>
        <dbReference type="ChEBI" id="CHEBI:83421"/>
        <dbReference type="ChEBI" id="CHEBI:456216"/>
        <dbReference type="EC" id="2.7.11.1"/>
    </reaction>
</comment>
<comment type="catalytic activity">
    <reaction evidence="2">
        <text>L-threonyl-[protein] + ATP = O-phospho-L-threonyl-[protein] + ADP + H(+)</text>
        <dbReference type="Rhea" id="RHEA:46608"/>
        <dbReference type="Rhea" id="RHEA-COMP:11060"/>
        <dbReference type="Rhea" id="RHEA-COMP:11605"/>
        <dbReference type="ChEBI" id="CHEBI:15378"/>
        <dbReference type="ChEBI" id="CHEBI:30013"/>
        <dbReference type="ChEBI" id="CHEBI:30616"/>
        <dbReference type="ChEBI" id="CHEBI:61977"/>
        <dbReference type="ChEBI" id="CHEBI:456216"/>
        <dbReference type="EC" id="2.7.11.1"/>
    </reaction>
</comment>
<comment type="subcellular location">
    <subcellularLocation>
        <location evidence="1">Cytoplasm</location>
        <location evidence="1">Cytoskeleton</location>
        <location evidence="1">Microtubule organizing center</location>
        <location evidence="1">Centrosome</location>
    </subcellularLocation>
    <subcellularLocation>
        <location>Nucleus</location>
    </subcellularLocation>
    <text evidence="1">During interphase is mainly nuclear, upon nuclear envelope breakdown localizes at the cytoplasm and during mitosis at the centrosomes.</text>
</comment>
<comment type="PTM">
    <text evidence="1">Phosphorylation at Thr-744 by CDK1 during M phase activates its kinase activity. Maximum phosphorylation occurs in prometaphase (By similarity).</text>
</comment>
<comment type="similarity">
    <text evidence="7">Belongs to the protein kinase superfamily. AGC Ser/Thr protein kinase family.</text>
</comment>
<protein>
    <recommendedName>
        <fullName>Serine/threonine-protein kinase greatwall</fullName>
        <shortName>GW</shortName>
        <shortName>GWL</shortName>
        <ecNumber evidence="2">2.7.11.1</ecNumber>
    </recommendedName>
    <alternativeName>
        <fullName>Microtubule-associated serine/threonine-protein kinase-like</fullName>
        <shortName>MAST-L</shortName>
    </alternativeName>
</protein>
<name>GWL_AILME</name>
<gene>
    <name type="primary">MASTL</name>
    <name type="synonym">GW</name>
    <name type="synonym">GWL</name>
    <name type="ORF">PANDA_017354</name>
</gene>
<reference key="1">
    <citation type="journal article" date="2010" name="Nature">
        <title>The sequence and de novo assembly of the giant panda genome.</title>
        <authorList>
            <person name="Li R."/>
            <person name="Fan W."/>
            <person name="Tian G."/>
            <person name="Zhu H."/>
            <person name="He L."/>
            <person name="Cai J."/>
            <person name="Huang Q."/>
            <person name="Cai Q."/>
            <person name="Li B."/>
            <person name="Bai Y."/>
            <person name="Zhang Z."/>
            <person name="Zhang Y."/>
            <person name="Wang W."/>
            <person name="Li J."/>
            <person name="Wei F."/>
            <person name="Li H."/>
            <person name="Jian M."/>
            <person name="Li J."/>
            <person name="Zhang Z."/>
            <person name="Nielsen R."/>
            <person name="Li D."/>
            <person name="Gu W."/>
            <person name="Yang Z."/>
            <person name="Xuan Z."/>
            <person name="Ryder O.A."/>
            <person name="Leung F.C."/>
            <person name="Zhou Y."/>
            <person name="Cao J."/>
            <person name="Sun X."/>
            <person name="Fu Y."/>
            <person name="Fang X."/>
            <person name="Guo X."/>
            <person name="Wang B."/>
            <person name="Hou R."/>
            <person name="Shen F."/>
            <person name="Mu B."/>
            <person name="Ni P."/>
            <person name="Lin R."/>
            <person name="Qian W."/>
            <person name="Wang G."/>
            <person name="Yu C."/>
            <person name="Nie W."/>
            <person name="Wang J."/>
            <person name="Wu Z."/>
            <person name="Liang H."/>
            <person name="Min J."/>
            <person name="Wu Q."/>
            <person name="Cheng S."/>
            <person name="Ruan J."/>
            <person name="Wang M."/>
            <person name="Shi Z."/>
            <person name="Wen M."/>
            <person name="Liu B."/>
            <person name="Ren X."/>
            <person name="Zheng H."/>
            <person name="Dong D."/>
            <person name="Cook K."/>
            <person name="Shan G."/>
            <person name="Zhang H."/>
            <person name="Kosiol C."/>
            <person name="Xie X."/>
            <person name="Lu Z."/>
            <person name="Zheng H."/>
            <person name="Li Y."/>
            <person name="Steiner C.C."/>
            <person name="Lam T.T."/>
            <person name="Lin S."/>
            <person name="Zhang Q."/>
            <person name="Li G."/>
            <person name="Tian J."/>
            <person name="Gong T."/>
            <person name="Liu H."/>
            <person name="Zhang D."/>
            <person name="Fang L."/>
            <person name="Ye C."/>
            <person name="Zhang J."/>
            <person name="Hu W."/>
            <person name="Xu A."/>
            <person name="Ren Y."/>
            <person name="Zhang G."/>
            <person name="Bruford M.W."/>
            <person name="Li Q."/>
            <person name="Ma L."/>
            <person name="Guo Y."/>
            <person name="An N."/>
            <person name="Hu Y."/>
            <person name="Zheng Y."/>
            <person name="Shi Y."/>
            <person name="Li Z."/>
            <person name="Liu Q."/>
            <person name="Chen Y."/>
            <person name="Zhao J."/>
            <person name="Qu N."/>
            <person name="Zhao S."/>
            <person name="Tian F."/>
            <person name="Wang X."/>
            <person name="Wang H."/>
            <person name="Xu L."/>
            <person name="Liu X."/>
            <person name="Vinar T."/>
            <person name="Wang Y."/>
            <person name="Lam T.W."/>
            <person name="Yiu S.M."/>
            <person name="Liu S."/>
            <person name="Zhang H."/>
            <person name="Li D."/>
            <person name="Huang Y."/>
            <person name="Wang X."/>
            <person name="Yang G."/>
            <person name="Jiang Z."/>
            <person name="Wang J."/>
            <person name="Qin N."/>
            <person name="Li L."/>
            <person name="Li J."/>
            <person name="Bolund L."/>
            <person name="Kristiansen K."/>
            <person name="Wong G.K."/>
            <person name="Olson M."/>
            <person name="Zhang X."/>
            <person name="Li S."/>
            <person name="Yang H."/>
            <person name="Wang J."/>
            <person name="Wang J."/>
        </authorList>
    </citation>
    <scope>NUCLEOTIDE SEQUENCE [LARGE SCALE GENOMIC DNA]</scope>
</reference>
<feature type="chain" id="PRO_0000408313" description="Serine/threonine-protein kinase greatwall">
    <location>
        <begin position="1"/>
        <end position="882"/>
    </location>
</feature>
<feature type="domain" description="Protein kinase" evidence="3">
    <location>
        <begin position="35"/>
        <end position="838"/>
    </location>
</feature>
<feature type="domain" description="AGC-kinase C-terminal" evidence="4">
    <location>
        <begin position="839"/>
        <end position="882"/>
    </location>
</feature>
<feature type="region of interest" description="Disordered" evidence="6">
    <location>
        <begin position="713"/>
        <end position="736"/>
    </location>
</feature>
<feature type="active site" description="Proton acceptor" evidence="3 5">
    <location>
        <position position="156"/>
    </location>
</feature>
<feature type="binding site" evidence="3">
    <location>
        <begin position="41"/>
        <end position="49"/>
    </location>
    <ligand>
        <name>ATP</name>
        <dbReference type="ChEBI" id="CHEBI:30616"/>
    </ligand>
</feature>
<feature type="binding site" evidence="3">
    <location>
        <position position="62"/>
    </location>
    <ligand>
        <name>ATP</name>
        <dbReference type="ChEBI" id="CHEBI:30616"/>
    </ligand>
</feature>
<feature type="modified residue" description="N-acetylmethionine" evidence="2">
    <location>
        <position position="1"/>
    </location>
</feature>
<feature type="modified residue" description="Phosphothreonine" evidence="2">
    <location>
        <position position="207"/>
    </location>
</feature>
<feature type="modified residue" description="Phosphothreonine" evidence="2">
    <location>
        <position position="222"/>
    </location>
</feature>
<feature type="modified residue" description="Phosphoserine" evidence="2">
    <location>
        <position position="293"/>
    </location>
</feature>
<feature type="modified residue" description="Phosphoserine" evidence="2">
    <location>
        <position position="371"/>
    </location>
</feature>
<feature type="modified residue" description="Phosphoserine" evidence="2">
    <location>
        <position position="454"/>
    </location>
</feature>
<feature type="modified residue" description="Phosphothreonine" evidence="2">
    <location>
        <position position="521"/>
    </location>
</feature>
<feature type="modified residue" description="Phosphoserine" evidence="2">
    <location>
        <position position="554"/>
    </location>
</feature>
<feature type="modified residue" description="Phosphoserine" evidence="2">
    <location>
        <position position="558"/>
    </location>
</feature>
<feature type="modified residue" description="Phosphoserine" evidence="2">
    <location>
        <position position="633"/>
    </location>
</feature>
<feature type="modified residue" description="Phosphoserine" evidence="2">
    <location>
        <position position="660"/>
    </location>
</feature>
<feature type="modified residue" description="Phosphoserine" evidence="2">
    <location>
        <position position="671"/>
    </location>
</feature>
<feature type="modified residue" description="Phosphothreonine" evidence="2">
    <location>
        <position position="725"/>
    </location>
</feature>
<feature type="modified residue" description="Phosphoserine" evidence="2">
    <location>
        <position position="728"/>
    </location>
</feature>
<feature type="modified residue" description="Phosphothreonine; by CDK1" evidence="2">
    <location>
        <position position="744"/>
    </location>
</feature>
<feature type="modified residue" description="Phosphoserine" evidence="2">
    <location>
        <position position="878"/>
    </location>
</feature>
<feature type="modified residue" description="Phosphoserine" evidence="2">
    <location>
        <position position="881"/>
    </location>
</feature>
<organism>
    <name type="scientific">Ailuropoda melanoleuca</name>
    <name type="common">Giant panda</name>
    <dbReference type="NCBI Taxonomy" id="9646"/>
    <lineage>
        <taxon>Eukaryota</taxon>
        <taxon>Metazoa</taxon>
        <taxon>Chordata</taxon>
        <taxon>Craniata</taxon>
        <taxon>Vertebrata</taxon>
        <taxon>Euteleostomi</taxon>
        <taxon>Mammalia</taxon>
        <taxon>Eutheria</taxon>
        <taxon>Laurasiatheria</taxon>
        <taxon>Carnivora</taxon>
        <taxon>Caniformia</taxon>
        <taxon>Ursidae</taxon>
        <taxon>Ailuropoda</taxon>
    </lineage>
</organism>
<dbReference type="EC" id="2.7.11.1" evidence="2"/>
<dbReference type="EMBL" id="GL193622">
    <property type="protein sequence ID" value="EFB17868.1"/>
    <property type="molecule type" value="Genomic_DNA"/>
</dbReference>
<dbReference type="RefSeq" id="XP_002927571.1">
    <property type="nucleotide sequence ID" value="XM_002927525.4"/>
</dbReference>
<dbReference type="SMR" id="D2HXI8"/>
<dbReference type="FunCoup" id="D2HXI8">
    <property type="interactions" value="31"/>
</dbReference>
<dbReference type="STRING" id="9646.ENSAMEP00000001970"/>
<dbReference type="Ensembl" id="ENSAMET00000002049.2">
    <property type="protein sequence ID" value="ENSAMEP00000001970.2"/>
    <property type="gene ID" value="ENSAMEG00000001855.2"/>
</dbReference>
<dbReference type="GeneID" id="100464443"/>
<dbReference type="KEGG" id="aml:100464443"/>
<dbReference type="CTD" id="84930"/>
<dbReference type="eggNOG" id="KOG0606">
    <property type="taxonomic scope" value="Eukaryota"/>
</dbReference>
<dbReference type="HOGENOM" id="CLU_016048_0_0_1"/>
<dbReference type="InParanoid" id="D2HXI8"/>
<dbReference type="OrthoDB" id="162894at2759"/>
<dbReference type="Proteomes" id="UP000008912">
    <property type="component" value="Unassembled WGS sequence"/>
</dbReference>
<dbReference type="GO" id="GO:0005813">
    <property type="term" value="C:centrosome"/>
    <property type="evidence" value="ECO:0000250"/>
    <property type="project" value="UniProtKB"/>
</dbReference>
<dbReference type="GO" id="GO:0032154">
    <property type="term" value="C:cleavage furrow"/>
    <property type="evidence" value="ECO:0000250"/>
    <property type="project" value="UniProtKB"/>
</dbReference>
<dbReference type="GO" id="GO:0005737">
    <property type="term" value="C:cytoplasm"/>
    <property type="evidence" value="ECO:0007669"/>
    <property type="project" value="UniProtKB-KW"/>
</dbReference>
<dbReference type="GO" id="GO:0005634">
    <property type="term" value="C:nucleus"/>
    <property type="evidence" value="ECO:0000250"/>
    <property type="project" value="UniProtKB"/>
</dbReference>
<dbReference type="GO" id="GO:0005524">
    <property type="term" value="F:ATP binding"/>
    <property type="evidence" value="ECO:0007669"/>
    <property type="project" value="UniProtKB-KW"/>
</dbReference>
<dbReference type="GO" id="GO:0051721">
    <property type="term" value="F:protein phosphatase 2A binding"/>
    <property type="evidence" value="ECO:0000250"/>
    <property type="project" value="UniProtKB"/>
</dbReference>
<dbReference type="GO" id="GO:0106310">
    <property type="term" value="F:protein serine kinase activity"/>
    <property type="evidence" value="ECO:0007669"/>
    <property type="project" value="RHEA"/>
</dbReference>
<dbReference type="GO" id="GO:0004674">
    <property type="term" value="F:protein serine/threonine kinase activity"/>
    <property type="evidence" value="ECO:0000250"/>
    <property type="project" value="UniProtKB"/>
</dbReference>
<dbReference type="GO" id="GO:0044325">
    <property type="term" value="F:transmembrane transporter binding"/>
    <property type="evidence" value="ECO:0007669"/>
    <property type="project" value="Ensembl"/>
</dbReference>
<dbReference type="GO" id="GO:0051301">
    <property type="term" value="P:cell division"/>
    <property type="evidence" value="ECO:0007669"/>
    <property type="project" value="UniProtKB-KW"/>
</dbReference>
<dbReference type="GO" id="GO:0006974">
    <property type="term" value="P:DNA damage response"/>
    <property type="evidence" value="ECO:0000250"/>
    <property type="project" value="UniProtKB"/>
</dbReference>
<dbReference type="GO" id="GO:0007147">
    <property type="term" value="P:female meiosis II"/>
    <property type="evidence" value="ECO:0007669"/>
    <property type="project" value="Ensembl"/>
</dbReference>
<dbReference type="GO" id="GO:0000086">
    <property type="term" value="P:G2/M transition of mitotic cell cycle"/>
    <property type="evidence" value="ECO:0000250"/>
    <property type="project" value="UniProtKB"/>
</dbReference>
<dbReference type="GO" id="GO:0035556">
    <property type="term" value="P:intracellular signal transduction"/>
    <property type="evidence" value="ECO:0007669"/>
    <property type="project" value="TreeGrafter"/>
</dbReference>
<dbReference type="GO" id="GO:0000278">
    <property type="term" value="P:mitotic cell cycle"/>
    <property type="evidence" value="ECO:0000250"/>
    <property type="project" value="UniProtKB"/>
</dbReference>
<dbReference type="CDD" id="cd05610">
    <property type="entry name" value="STKc_MASTL"/>
    <property type="match status" value="1"/>
</dbReference>
<dbReference type="FunFam" id="1.10.510.10:FF:000278">
    <property type="entry name" value="serine/threonine-protein kinase greatwall isoform X1"/>
    <property type="match status" value="1"/>
</dbReference>
<dbReference type="FunFam" id="1.10.510.10:FF:001219">
    <property type="entry name" value="serine/threonine-protein kinase greatwall isoform X1"/>
    <property type="match status" value="1"/>
</dbReference>
<dbReference type="FunFam" id="3.30.200.20:FF:000277">
    <property type="entry name" value="serine/threonine-protein kinase greatwall isoform X1"/>
    <property type="match status" value="1"/>
</dbReference>
<dbReference type="Gene3D" id="3.30.200.20">
    <property type="entry name" value="Phosphorylase Kinase, domain 1"/>
    <property type="match status" value="2"/>
</dbReference>
<dbReference type="Gene3D" id="1.10.510.10">
    <property type="entry name" value="Transferase(Phosphotransferase) domain 1"/>
    <property type="match status" value="2"/>
</dbReference>
<dbReference type="InterPro" id="IPR000961">
    <property type="entry name" value="AGC-kinase_C"/>
</dbReference>
<dbReference type="InterPro" id="IPR011009">
    <property type="entry name" value="Kinase-like_dom_sf"/>
</dbReference>
<dbReference type="InterPro" id="IPR037638">
    <property type="entry name" value="MASTL_STKc"/>
</dbReference>
<dbReference type="InterPro" id="IPR000719">
    <property type="entry name" value="Prot_kinase_dom"/>
</dbReference>
<dbReference type="InterPro" id="IPR008271">
    <property type="entry name" value="Ser/Thr_kinase_AS"/>
</dbReference>
<dbReference type="InterPro" id="IPR050236">
    <property type="entry name" value="Ser_Thr_kinase_AGC"/>
</dbReference>
<dbReference type="PANTHER" id="PTHR24356">
    <property type="entry name" value="SERINE/THREONINE-PROTEIN KINASE"/>
    <property type="match status" value="1"/>
</dbReference>
<dbReference type="PANTHER" id="PTHR24356:SF1">
    <property type="entry name" value="SERINE_THREONINE-PROTEIN KINASE GREATWALL"/>
    <property type="match status" value="1"/>
</dbReference>
<dbReference type="Pfam" id="PF00069">
    <property type="entry name" value="Pkinase"/>
    <property type="match status" value="2"/>
</dbReference>
<dbReference type="SMART" id="SM00220">
    <property type="entry name" value="S_TKc"/>
    <property type="match status" value="1"/>
</dbReference>
<dbReference type="SUPFAM" id="SSF56112">
    <property type="entry name" value="Protein kinase-like (PK-like)"/>
    <property type="match status" value="1"/>
</dbReference>
<dbReference type="PROSITE" id="PS51285">
    <property type="entry name" value="AGC_KINASE_CTER"/>
    <property type="match status" value="1"/>
</dbReference>
<dbReference type="PROSITE" id="PS50011">
    <property type="entry name" value="PROTEIN_KINASE_DOM"/>
    <property type="match status" value="1"/>
</dbReference>
<dbReference type="PROSITE" id="PS00108">
    <property type="entry name" value="PROTEIN_KINASE_ST"/>
    <property type="match status" value="1"/>
</dbReference>
<keyword id="KW-0007">Acetylation</keyword>
<keyword id="KW-0067">ATP-binding</keyword>
<keyword id="KW-0131">Cell cycle</keyword>
<keyword id="KW-0132">Cell division</keyword>
<keyword id="KW-0963">Cytoplasm</keyword>
<keyword id="KW-0206">Cytoskeleton</keyword>
<keyword id="KW-0418">Kinase</keyword>
<keyword id="KW-0498">Mitosis</keyword>
<keyword id="KW-0547">Nucleotide-binding</keyword>
<keyword id="KW-0539">Nucleus</keyword>
<keyword id="KW-0597">Phosphoprotein</keyword>
<keyword id="KW-1185">Reference proteome</keyword>
<keyword id="KW-0723">Serine/threonine-protein kinase</keyword>
<keyword id="KW-0808">Transferase</keyword>